<sequence>MNLIPTVIETTNRGERAYDIYSRLLKDRIIMLGSQIDDNVANSIVSQLLFLQAQDSEKDIYLYINSPGGSVTAGFAIYDTIQHIKPDVQTICIGMAASMGSFLLAAGAKGKRFALPNAEVMIHQPLGGAQGQATEIEIAANHILKTREKLNRILSERTGQSIEKIQKDTDRDNFLTAEEAKEYGLIDEVMVPETK</sequence>
<organism>
    <name type="scientific">Staphylococcus aureus (strain Mu50 / ATCC 700699)</name>
    <dbReference type="NCBI Taxonomy" id="158878"/>
    <lineage>
        <taxon>Bacteria</taxon>
        <taxon>Bacillati</taxon>
        <taxon>Bacillota</taxon>
        <taxon>Bacilli</taxon>
        <taxon>Bacillales</taxon>
        <taxon>Staphylococcaceae</taxon>
        <taxon>Staphylococcus</taxon>
    </lineage>
</organism>
<evidence type="ECO:0000255" key="1">
    <source>
        <dbReference type="HAMAP-Rule" id="MF_00444"/>
    </source>
</evidence>
<dbReference type="EC" id="3.4.21.92" evidence="1"/>
<dbReference type="EMBL" id="BA000017">
    <property type="protein sequence ID" value="BAB56930.1"/>
    <property type="molecule type" value="Genomic_DNA"/>
</dbReference>
<dbReference type="RefSeq" id="WP_001049165.1">
    <property type="nucleotide sequence ID" value="NC_002758.2"/>
</dbReference>
<dbReference type="SMR" id="P63785"/>
<dbReference type="MEROPS" id="S14.001"/>
<dbReference type="GeneID" id="98345115"/>
<dbReference type="KEGG" id="sav:SAV0768"/>
<dbReference type="HOGENOM" id="CLU_058707_3_2_9"/>
<dbReference type="PhylomeDB" id="P63785"/>
<dbReference type="Proteomes" id="UP000002481">
    <property type="component" value="Chromosome"/>
</dbReference>
<dbReference type="GO" id="GO:0005737">
    <property type="term" value="C:cytoplasm"/>
    <property type="evidence" value="ECO:0007669"/>
    <property type="project" value="UniProtKB-SubCell"/>
</dbReference>
<dbReference type="GO" id="GO:0009368">
    <property type="term" value="C:endopeptidase Clp complex"/>
    <property type="evidence" value="ECO:0007669"/>
    <property type="project" value="TreeGrafter"/>
</dbReference>
<dbReference type="GO" id="GO:0004176">
    <property type="term" value="F:ATP-dependent peptidase activity"/>
    <property type="evidence" value="ECO:0007669"/>
    <property type="project" value="InterPro"/>
</dbReference>
<dbReference type="GO" id="GO:0051117">
    <property type="term" value="F:ATPase binding"/>
    <property type="evidence" value="ECO:0007669"/>
    <property type="project" value="TreeGrafter"/>
</dbReference>
<dbReference type="GO" id="GO:0004252">
    <property type="term" value="F:serine-type endopeptidase activity"/>
    <property type="evidence" value="ECO:0007669"/>
    <property type="project" value="UniProtKB-UniRule"/>
</dbReference>
<dbReference type="GO" id="GO:0006515">
    <property type="term" value="P:protein quality control for misfolded or incompletely synthesized proteins"/>
    <property type="evidence" value="ECO:0007669"/>
    <property type="project" value="TreeGrafter"/>
</dbReference>
<dbReference type="CDD" id="cd07017">
    <property type="entry name" value="S14_ClpP_2"/>
    <property type="match status" value="1"/>
</dbReference>
<dbReference type="FunFam" id="3.90.226.10:FF:000001">
    <property type="entry name" value="ATP-dependent Clp protease proteolytic subunit"/>
    <property type="match status" value="1"/>
</dbReference>
<dbReference type="Gene3D" id="3.90.226.10">
    <property type="entry name" value="2-enoyl-CoA Hydratase, Chain A, domain 1"/>
    <property type="match status" value="1"/>
</dbReference>
<dbReference type="HAMAP" id="MF_00444">
    <property type="entry name" value="ClpP"/>
    <property type="match status" value="1"/>
</dbReference>
<dbReference type="InterPro" id="IPR001907">
    <property type="entry name" value="ClpP"/>
</dbReference>
<dbReference type="InterPro" id="IPR029045">
    <property type="entry name" value="ClpP/crotonase-like_dom_sf"/>
</dbReference>
<dbReference type="InterPro" id="IPR023562">
    <property type="entry name" value="ClpP/TepA"/>
</dbReference>
<dbReference type="InterPro" id="IPR033135">
    <property type="entry name" value="ClpP_His_AS"/>
</dbReference>
<dbReference type="InterPro" id="IPR018215">
    <property type="entry name" value="ClpP_Ser_AS"/>
</dbReference>
<dbReference type="NCBIfam" id="TIGR00493">
    <property type="entry name" value="clpP"/>
    <property type="match status" value="1"/>
</dbReference>
<dbReference type="NCBIfam" id="NF001368">
    <property type="entry name" value="PRK00277.1"/>
    <property type="match status" value="1"/>
</dbReference>
<dbReference type="NCBIfam" id="NF009205">
    <property type="entry name" value="PRK12553.1"/>
    <property type="match status" value="1"/>
</dbReference>
<dbReference type="PANTHER" id="PTHR10381">
    <property type="entry name" value="ATP-DEPENDENT CLP PROTEASE PROTEOLYTIC SUBUNIT"/>
    <property type="match status" value="1"/>
</dbReference>
<dbReference type="PANTHER" id="PTHR10381:SF70">
    <property type="entry name" value="ATP-DEPENDENT CLP PROTEASE PROTEOLYTIC SUBUNIT"/>
    <property type="match status" value="1"/>
</dbReference>
<dbReference type="Pfam" id="PF00574">
    <property type="entry name" value="CLP_protease"/>
    <property type="match status" value="1"/>
</dbReference>
<dbReference type="PRINTS" id="PR00127">
    <property type="entry name" value="CLPPROTEASEP"/>
</dbReference>
<dbReference type="SUPFAM" id="SSF52096">
    <property type="entry name" value="ClpP/crotonase"/>
    <property type="match status" value="1"/>
</dbReference>
<dbReference type="PROSITE" id="PS00382">
    <property type="entry name" value="CLP_PROTEASE_HIS"/>
    <property type="match status" value="1"/>
</dbReference>
<dbReference type="PROSITE" id="PS00381">
    <property type="entry name" value="CLP_PROTEASE_SER"/>
    <property type="match status" value="1"/>
</dbReference>
<name>CLPP_STAAM</name>
<reference key="1">
    <citation type="journal article" date="2001" name="Lancet">
        <title>Whole genome sequencing of meticillin-resistant Staphylococcus aureus.</title>
        <authorList>
            <person name="Kuroda M."/>
            <person name="Ohta T."/>
            <person name="Uchiyama I."/>
            <person name="Baba T."/>
            <person name="Yuzawa H."/>
            <person name="Kobayashi I."/>
            <person name="Cui L."/>
            <person name="Oguchi A."/>
            <person name="Aoki K."/>
            <person name="Nagai Y."/>
            <person name="Lian J.-Q."/>
            <person name="Ito T."/>
            <person name="Kanamori M."/>
            <person name="Matsumaru H."/>
            <person name="Maruyama A."/>
            <person name="Murakami H."/>
            <person name="Hosoyama A."/>
            <person name="Mizutani-Ui Y."/>
            <person name="Takahashi N.K."/>
            <person name="Sawano T."/>
            <person name="Inoue R."/>
            <person name="Kaito C."/>
            <person name="Sekimizu K."/>
            <person name="Hirakawa H."/>
            <person name="Kuhara S."/>
            <person name="Goto S."/>
            <person name="Yabuzaki J."/>
            <person name="Kanehisa M."/>
            <person name="Yamashita A."/>
            <person name="Oshima K."/>
            <person name="Furuya K."/>
            <person name="Yoshino C."/>
            <person name="Shiba T."/>
            <person name="Hattori M."/>
            <person name="Ogasawara N."/>
            <person name="Hayashi H."/>
            <person name="Hiramatsu K."/>
        </authorList>
    </citation>
    <scope>NUCLEOTIDE SEQUENCE [LARGE SCALE GENOMIC DNA]</scope>
    <source>
        <strain>Mu50 / ATCC 700699</strain>
    </source>
</reference>
<protein>
    <recommendedName>
        <fullName evidence="1">ATP-dependent Clp protease proteolytic subunit</fullName>
        <ecNumber evidence="1">3.4.21.92</ecNumber>
    </recommendedName>
    <alternativeName>
        <fullName evidence="1">Endopeptidase Clp</fullName>
    </alternativeName>
</protein>
<keyword id="KW-0963">Cytoplasm</keyword>
<keyword id="KW-0378">Hydrolase</keyword>
<keyword id="KW-0645">Protease</keyword>
<keyword id="KW-0720">Serine protease</keyword>
<comment type="function">
    <text evidence="1">Cleaves peptides in various proteins in a process that requires ATP hydrolysis. Has a chymotrypsin-like activity. Plays a major role in the degradation of misfolded proteins.</text>
</comment>
<comment type="catalytic activity">
    <reaction evidence="1">
        <text>Hydrolysis of proteins to small peptides in the presence of ATP and magnesium. alpha-casein is the usual test substrate. In the absence of ATP, only oligopeptides shorter than five residues are hydrolyzed (such as succinyl-Leu-Tyr-|-NHMec, and Leu-Tyr-Leu-|-Tyr-Trp, in which cleavage of the -Tyr-|-Leu- and -Tyr-|-Trp bonds also occurs).</text>
        <dbReference type="EC" id="3.4.21.92"/>
    </reaction>
</comment>
<comment type="subunit">
    <text evidence="1">Fourteen ClpP subunits assemble into 2 heptameric rings which stack back to back to give a disk-like structure with a central cavity, resembling the structure of eukaryotic proteasomes.</text>
</comment>
<comment type="subcellular location">
    <subcellularLocation>
        <location evidence="1">Cytoplasm</location>
    </subcellularLocation>
</comment>
<comment type="similarity">
    <text evidence="1">Belongs to the peptidase S14 family.</text>
</comment>
<feature type="chain" id="PRO_0000179650" description="ATP-dependent Clp protease proteolytic subunit">
    <location>
        <begin position="1"/>
        <end position="195"/>
    </location>
</feature>
<feature type="active site" description="Nucleophile" evidence="1">
    <location>
        <position position="98"/>
    </location>
</feature>
<feature type="active site" evidence="1">
    <location>
        <position position="123"/>
    </location>
</feature>
<gene>
    <name evidence="1" type="primary">clpP</name>
    <name type="ordered locus">SAV0768</name>
</gene>
<proteinExistence type="inferred from homology"/>
<accession>P63785</accession>
<accession>Q99VK9</accession>